<organism>
    <name type="scientific">Shigella flexneri</name>
    <dbReference type="NCBI Taxonomy" id="623"/>
    <lineage>
        <taxon>Bacteria</taxon>
        <taxon>Pseudomonadati</taxon>
        <taxon>Pseudomonadota</taxon>
        <taxon>Gammaproteobacteria</taxon>
        <taxon>Enterobacterales</taxon>
        <taxon>Enterobacteriaceae</taxon>
        <taxon>Shigella</taxon>
    </lineage>
</organism>
<sequence length="283" mass="31597">MLIIETLPLLRQQIRRLRMEGKRVALVPTMGNLHNGHMKLVDEAKARADVVVVSIFVNPMQFDRPEDLARYPRTLQEDCEKLNKRKVDLVFAPSVKEIYPNGTETHTYVDVPGLSTMLEGASRPGHFRGVSTIVSKLFNLVQPDIACFGEKDFQQLALIRKMVADMGFDIEIVGVPIMRAKDGLALSSRNGYLTAEQRKIAPGLYKVLSSIADKLQAGERDLDEIITIAGQELNEKGFRADDIQIRDADTLLEVSETSKRAVILVAAWLGDARLIDNKMVELA</sequence>
<accession>Q83SM0</accession>
<accession>Q7C386</accession>
<proteinExistence type="inferred from homology"/>
<dbReference type="EC" id="6.3.2.1" evidence="1"/>
<dbReference type="EMBL" id="AE005674">
    <property type="protein sequence ID" value="AAN41793.1"/>
    <property type="molecule type" value="Genomic_DNA"/>
</dbReference>
<dbReference type="EMBL" id="AE014073">
    <property type="protein sequence ID" value="AAP15674.1"/>
    <property type="molecule type" value="Genomic_DNA"/>
</dbReference>
<dbReference type="RefSeq" id="NP_706086.1">
    <property type="nucleotide sequence ID" value="NC_004337.2"/>
</dbReference>
<dbReference type="RefSeq" id="WP_000905404.1">
    <property type="nucleotide sequence ID" value="NZ_WPGW01000007.1"/>
</dbReference>
<dbReference type="SMR" id="Q83SM0"/>
<dbReference type="STRING" id="198214.SF0130"/>
<dbReference type="PaxDb" id="198214-SF0130"/>
<dbReference type="GeneID" id="1024504"/>
<dbReference type="KEGG" id="sfl:SF0130"/>
<dbReference type="KEGG" id="sfx:S0132"/>
<dbReference type="PATRIC" id="fig|198214.7.peg.146"/>
<dbReference type="HOGENOM" id="CLU_047148_0_0_6"/>
<dbReference type="UniPathway" id="UPA00028">
    <property type="reaction ID" value="UER00005"/>
</dbReference>
<dbReference type="Proteomes" id="UP000001006">
    <property type="component" value="Chromosome"/>
</dbReference>
<dbReference type="Proteomes" id="UP000002673">
    <property type="component" value="Chromosome"/>
</dbReference>
<dbReference type="GO" id="GO:0005829">
    <property type="term" value="C:cytosol"/>
    <property type="evidence" value="ECO:0007669"/>
    <property type="project" value="TreeGrafter"/>
</dbReference>
<dbReference type="GO" id="GO:0005524">
    <property type="term" value="F:ATP binding"/>
    <property type="evidence" value="ECO:0007669"/>
    <property type="project" value="UniProtKB-KW"/>
</dbReference>
<dbReference type="GO" id="GO:0004592">
    <property type="term" value="F:pantoate-beta-alanine ligase activity"/>
    <property type="evidence" value="ECO:0007669"/>
    <property type="project" value="UniProtKB-UniRule"/>
</dbReference>
<dbReference type="GO" id="GO:0015940">
    <property type="term" value="P:pantothenate biosynthetic process"/>
    <property type="evidence" value="ECO:0007669"/>
    <property type="project" value="UniProtKB-UniRule"/>
</dbReference>
<dbReference type="CDD" id="cd00560">
    <property type="entry name" value="PanC"/>
    <property type="match status" value="1"/>
</dbReference>
<dbReference type="FunFam" id="3.30.1300.10:FF:000001">
    <property type="entry name" value="Pantothenate synthetase"/>
    <property type="match status" value="1"/>
</dbReference>
<dbReference type="FunFam" id="3.40.50.620:FF:000013">
    <property type="entry name" value="Pantothenate synthetase"/>
    <property type="match status" value="1"/>
</dbReference>
<dbReference type="Gene3D" id="3.40.50.620">
    <property type="entry name" value="HUPs"/>
    <property type="match status" value="1"/>
</dbReference>
<dbReference type="Gene3D" id="3.30.1300.10">
    <property type="entry name" value="Pantoate-beta-alanine ligase, C-terminal domain"/>
    <property type="match status" value="1"/>
</dbReference>
<dbReference type="HAMAP" id="MF_00158">
    <property type="entry name" value="PanC"/>
    <property type="match status" value="1"/>
</dbReference>
<dbReference type="InterPro" id="IPR004821">
    <property type="entry name" value="Cyt_trans-like"/>
</dbReference>
<dbReference type="InterPro" id="IPR003721">
    <property type="entry name" value="Pantoate_ligase"/>
</dbReference>
<dbReference type="InterPro" id="IPR042176">
    <property type="entry name" value="Pantoate_ligase_C"/>
</dbReference>
<dbReference type="InterPro" id="IPR014729">
    <property type="entry name" value="Rossmann-like_a/b/a_fold"/>
</dbReference>
<dbReference type="NCBIfam" id="TIGR00125">
    <property type="entry name" value="cyt_tran_rel"/>
    <property type="match status" value="1"/>
</dbReference>
<dbReference type="NCBIfam" id="TIGR00018">
    <property type="entry name" value="panC"/>
    <property type="match status" value="1"/>
</dbReference>
<dbReference type="PANTHER" id="PTHR21299">
    <property type="entry name" value="CYTIDYLATE KINASE/PANTOATE-BETA-ALANINE LIGASE"/>
    <property type="match status" value="1"/>
</dbReference>
<dbReference type="PANTHER" id="PTHR21299:SF1">
    <property type="entry name" value="PANTOATE--BETA-ALANINE LIGASE"/>
    <property type="match status" value="1"/>
</dbReference>
<dbReference type="Pfam" id="PF02569">
    <property type="entry name" value="Pantoate_ligase"/>
    <property type="match status" value="1"/>
</dbReference>
<dbReference type="SUPFAM" id="SSF52374">
    <property type="entry name" value="Nucleotidylyl transferase"/>
    <property type="match status" value="1"/>
</dbReference>
<feature type="chain" id="PRO_0000128268" description="Pantothenate synthetase">
    <location>
        <begin position="1"/>
        <end position="283"/>
    </location>
</feature>
<feature type="active site" description="Proton donor" evidence="1">
    <location>
        <position position="37"/>
    </location>
</feature>
<feature type="binding site" evidence="1">
    <location>
        <begin position="30"/>
        <end position="37"/>
    </location>
    <ligand>
        <name>ATP</name>
        <dbReference type="ChEBI" id="CHEBI:30616"/>
    </ligand>
</feature>
<feature type="binding site" evidence="1">
    <location>
        <position position="61"/>
    </location>
    <ligand>
        <name>(R)-pantoate</name>
        <dbReference type="ChEBI" id="CHEBI:15980"/>
    </ligand>
</feature>
<feature type="binding site" evidence="1">
    <location>
        <position position="61"/>
    </location>
    <ligand>
        <name>beta-alanine</name>
        <dbReference type="ChEBI" id="CHEBI:57966"/>
    </ligand>
</feature>
<feature type="binding site" evidence="1">
    <location>
        <begin position="149"/>
        <end position="152"/>
    </location>
    <ligand>
        <name>ATP</name>
        <dbReference type="ChEBI" id="CHEBI:30616"/>
    </ligand>
</feature>
<feature type="binding site" evidence="1">
    <location>
        <position position="155"/>
    </location>
    <ligand>
        <name>(R)-pantoate</name>
        <dbReference type="ChEBI" id="CHEBI:15980"/>
    </ligand>
</feature>
<feature type="binding site" evidence="1">
    <location>
        <begin position="186"/>
        <end position="189"/>
    </location>
    <ligand>
        <name>ATP</name>
        <dbReference type="ChEBI" id="CHEBI:30616"/>
    </ligand>
</feature>
<evidence type="ECO:0000255" key="1">
    <source>
        <dbReference type="HAMAP-Rule" id="MF_00158"/>
    </source>
</evidence>
<name>PANC_SHIFL</name>
<protein>
    <recommendedName>
        <fullName evidence="1">Pantothenate synthetase</fullName>
        <shortName evidence="1">PS</shortName>
        <ecNumber evidence="1">6.3.2.1</ecNumber>
    </recommendedName>
    <alternativeName>
        <fullName evidence="1">Pantoate--beta-alanine ligase</fullName>
    </alternativeName>
    <alternativeName>
        <fullName evidence="1">Pantoate-activating enzyme</fullName>
    </alternativeName>
</protein>
<reference key="1">
    <citation type="journal article" date="2002" name="Nucleic Acids Res.">
        <title>Genome sequence of Shigella flexneri 2a: insights into pathogenicity through comparison with genomes of Escherichia coli K12 and O157.</title>
        <authorList>
            <person name="Jin Q."/>
            <person name="Yuan Z."/>
            <person name="Xu J."/>
            <person name="Wang Y."/>
            <person name="Shen Y."/>
            <person name="Lu W."/>
            <person name="Wang J."/>
            <person name="Liu H."/>
            <person name="Yang J."/>
            <person name="Yang F."/>
            <person name="Zhang X."/>
            <person name="Zhang J."/>
            <person name="Yang G."/>
            <person name="Wu H."/>
            <person name="Qu D."/>
            <person name="Dong J."/>
            <person name="Sun L."/>
            <person name="Xue Y."/>
            <person name="Zhao A."/>
            <person name="Gao Y."/>
            <person name="Zhu J."/>
            <person name="Kan B."/>
            <person name="Ding K."/>
            <person name="Chen S."/>
            <person name="Cheng H."/>
            <person name="Yao Z."/>
            <person name="He B."/>
            <person name="Chen R."/>
            <person name="Ma D."/>
            <person name="Qiang B."/>
            <person name="Wen Y."/>
            <person name="Hou Y."/>
            <person name="Yu J."/>
        </authorList>
    </citation>
    <scope>NUCLEOTIDE SEQUENCE [LARGE SCALE GENOMIC DNA]</scope>
    <source>
        <strain>301 / Serotype 2a</strain>
    </source>
</reference>
<reference key="2">
    <citation type="journal article" date="2003" name="Infect. Immun.">
        <title>Complete genome sequence and comparative genomics of Shigella flexneri serotype 2a strain 2457T.</title>
        <authorList>
            <person name="Wei J."/>
            <person name="Goldberg M.B."/>
            <person name="Burland V."/>
            <person name="Venkatesan M.M."/>
            <person name="Deng W."/>
            <person name="Fournier G."/>
            <person name="Mayhew G.F."/>
            <person name="Plunkett G. III"/>
            <person name="Rose D.J."/>
            <person name="Darling A."/>
            <person name="Mau B."/>
            <person name="Perna N.T."/>
            <person name="Payne S.M."/>
            <person name="Runyen-Janecky L.J."/>
            <person name="Zhou S."/>
            <person name="Schwartz D.C."/>
            <person name="Blattner F.R."/>
        </authorList>
    </citation>
    <scope>NUCLEOTIDE SEQUENCE [LARGE SCALE GENOMIC DNA]</scope>
    <source>
        <strain>ATCC 700930 / 2457T / Serotype 2a</strain>
    </source>
</reference>
<keyword id="KW-0067">ATP-binding</keyword>
<keyword id="KW-0963">Cytoplasm</keyword>
<keyword id="KW-0436">Ligase</keyword>
<keyword id="KW-0547">Nucleotide-binding</keyword>
<keyword id="KW-0566">Pantothenate biosynthesis</keyword>
<keyword id="KW-1185">Reference proteome</keyword>
<gene>
    <name evidence="1" type="primary">panC</name>
    <name type="ordered locus">SF0130</name>
    <name type="ordered locus">S0132</name>
</gene>
<comment type="function">
    <text evidence="1">Catalyzes the condensation of pantoate with beta-alanine in an ATP-dependent reaction via a pantoyl-adenylate intermediate.</text>
</comment>
<comment type="catalytic activity">
    <reaction evidence="1">
        <text>(R)-pantoate + beta-alanine + ATP = (R)-pantothenate + AMP + diphosphate + H(+)</text>
        <dbReference type="Rhea" id="RHEA:10912"/>
        <dbReference type="ChEBI" id="CHEBI:15378"/>
        <dbReference type="ChEBI" id="CHEBI:15980"/>
        <dbReference type="ChEBI" id="CHEBI:29032"/>
        <dbReference type="ChEBI" id="CHEBI:30616"/>
        <dbReference type="ChEBI" id="CHEBI:33019"/>
        <dbReference type="ChEBI" id="CHEBI:57966"/>
        <dbReference type="ChEBI" id="CHEBI:456215"/>
        <dbReference type="EC" id="6.3.2.1"/>
    </reaction>
</comment>
<comment type="pathway">
    <text evidence="1">Cofactor biosynthesis; (R)-pantothenate biosynthesis; (R)-pantothenate from (R)-pantoate and beta-alanine: step 1/1.</text>
</comment>
<comment type="subunit">
    <text evidence="1">Homodimer.</text>
</comment>
<comment type="subcellular location">
    <subcellularLocation>
        <location evidence="1">Cytoplasm</location>
    </subcellularLocation>
</comment>
<comment type="miscellaneous">
    <text evidence="1">The reaction proceeds by a bi uni uni bi ping pong mechanism.</text>
</comment>
<comment type="similarity">
    <text evidence="1">Belongs to the pantothenate synthetase family.</text>
</comment>